<feature type="chain" id="PRO_0000401932" description="Zinc finger and SCAN domain-containing protein 2">
    <location>
        <begin position="1"/>
        <end position="645"/>
    </location>
</feature>
<feature type="domain" description="SCAN box" evidence="3">
    <location>
        <begin position="59"/>
        <end position="132"/>
    </location>
</feature>
<feature type="zinc finger region" description="C2H2-type 1" evidence="2">
    <location>
        <begin position="253"/>
        <end position="275"/>
    </location>
</feature>
<feature type="zinc finger region" description="C2H2-type 2" evidence="2">
    <location>
        <begin position="281"/>
        <end position="303"/>
    </location>
</feature>
<feature type="zinc finger region" description="C2H2-type 3" evidence="2">
    <location>
        <begin position="309"/>
        <end position="331"/>
    </location>
</feature>
<feature type="zinc finger region" description="C2H2-type 4" evidence="2">
    <location>
        <begin position="337"/>
        <end position="359"/>
    </location>
</feature>
<feature type="zinc finger region" description="C2H2-type 5" evidence="2">
    <location>
        <begin position="365"/>
        <end position="387"/>
    </location>
</feature>
<feature type="zinc finger region" description="C2H2-type 6" evidence="2">
    <location>
        <begin position="393"/>
        <end position="415"/>
    </location>
</feature>
<feature type="zinc finger region" description="C2H2-type 7" evidence="2">
    <location>
        <begin position="421"/>
        <end position="443"/>
    </location>
</feature>
<feature type="zinc finger region" description="C2H2-type 8" evidence="2">
    <location>
        <begin position="449"/>
        <end position="471"/>
    </location>
</feature>
<feature type="zinc finger region" description="C2H2-type 9" evidence="2">
    <location>
        <begin position="477"/>
        <end position="499"/>
    </location>
</feature>
<feature type="zinc finger region" description="C2H2-type 10" evidence="2">
    <location>
        <begin position="505"/>
        <end position="527"/>
    </location>
</feature>
<feature type="zinc finger region" description="C2H2-type 11" evidence="2">
    <location>
        <begin position="533"/>
        <end position="555"/>
    </location>
</feature>
<feature type="zinc finger region" description="C2H2-type 12" evidence="2">
    <location>
        <begin position="561"/>
        <end position="583"/>
    </location>
</feature>
<feature type="zinc finger region" description="C2H2-type 13" evidence="2">
    <location>
        <begin position="589"/>
        <end position="611"/>
    </location>
</feature>
<feature type="zinc finger region" description="C2H2-type 14" evidence="2">
    <location>
        <begin position="617"/>
        <end position="639"/>
    </location>
</feature>
<feature type="region of interest" description="Disordered" evidence="4">
    <location>
        <begin position="1"/>
        <end position="25"/>
    </location>
</feature>
<feature type="region of interest" description="Disordered" evidence="4">
    <location>
        <begin position="37"/>
        <end position="75"/>
    </location>
</feature>
<feature type="region of interest" description="Disordered" evidence="4">
    <location>
        <begin position="193"/>
        <end position="230"/>
    </location>
</feature>
<feature type="compositionally biased region" description="Basic and acidic residues" evidence="4">
    <location>
        <begin position="199"/>
        <end position="214"/>
    </location>
</feature>
<keyword id="KW-0217">Developmental protein</keyword>
<keyword id="KW-0221">Differentiation</keyword>
<keyword id="KW-0238">DNA-binding</keyword>
<keyword id="KW-0479">Metal-binding</keyword>
<keyword id="KW-0539">Nucleus</keyword>
<keyword id="KW-1185">Reference proteome</keyword>
<keyword id="KW-0677">Repeat</keyword>
<keyword id="KW-0744">Spermatogenesis</keyword>
<keyword id="KW-0804">Transcription</keyword>
<keyword id="KW-0805">Transcription regulation</keyword>
<keyword id="KW-0862">Zinc</keyword>
<keyword id="KW-0863">Zinc-finger</keyword>
<protein>
    <recommendedName>
        <fullName>Zinc finger and SCAN domain-containing protein 2</fullName>
    </recommendedName>
    <alternativeName>
        <fullName>Zinc finger protein 29 homolog</fullName>
        <shortName>Zfp-29</shortName>
    </alternativeName>
</protein>
<gene>
    <name type="primary">ZSCAN2</name>
    <name type="synonym">ZFP29</name>
</gene>
<reference key="1">
    <citation type="submission" date="2004-11" db="EMBL/GenBank/DDBJ databases">
        <authorList>
            <consortium name="The German cDNA consortium"/>
        </authorList>
    </citation>
    <scope>NUCLEOTIDE SEQUENCE [LARGE SCALE MRNA]</scope>
    <source>
        <tissue>Kidney</tissue>
    </source>
</reference>
<comment type="function">
    <text evidence="1">May be involved in transcriptional regulation during the post-meiotic stages of spermatogenesis.</text>
</comment>
<comment type="subcellular location">
    <subcellularLocation>
        <location evidence="3">Nucleus</location>
    </subcellularLocation>
</comment>
<comment type="similarity">
    <text evidence="5">Belongs to the krueppel C2H2-type zinc-finger protein family.</text>
</comment>
<name>ZSCA2_PONAB</name>
<accession>Q5RCD9</accession>
<organism>
    <name type="scientific">Pongo abelii</name>
    <name type="common">Sumatran orangutan</name>
    <name type="synonym">Pongo pygmaeus abelii</name>
    <dbReference type="NCBI Taxonomy" id="9601"/>
    <lineage>
        <taxon>Eukaryota</taxon>
        <taxon>Metazoa</taxon>
        <taxon>Chordata</taxon>
        <taxon>Craniata</taxon>
        <taxon>Vertebrata</taxon>
        <taxon>Euteleostomi</taxon>
        <taxon>Mammalia</taxon>
        <taxon>Eutheria</taxon>
        <taxon>Euarchontoglires</taxon>
        <taxon>Primates</taxon>
        <taxon>Haplorrhini</taxon>
        <taxon>Catarrhini</taxon>
        <taxon>Hominidae</taxon>
        <taxon>Pongo</taxon>
    </lineage>
</organism>
<evidence type="ECO:0000250" key="1"/>
<evidence type="ECO:0000255" key="2">
    <source>
        <dbReference type="PROSITE-ProRule" id="PRU00042"/>
    </source>
</evidence>
<evidence type="ECO:0000255" key="3">
    <source>
        <dbReference type="PROSITE-ProRule" id="PRU00187"/>
    </source>
</evidence>
<evidence type="ECO:0000256" key="4">
    <source>
        <dbReference type="SAM" id="MobiDB-lite"/>
    </source>
</evidence>
<evidence type="ECO:0000305" key="5"/>
<proteinExistence type="evidence at transcript level"/>
<dbReference type="EMBL" id="CR858332">
    <property type="protein sequence ID" value="CAH90568.1"/>
    <property type="molecule type" value="mRNA"/>
</dbReference>
<dbReference type="RefSeq" id="NP_001125303.1">
    <property type="nucleotide sequence ID" value="NM_001131831.1"/>
</dbReference>
<dbReference type="SMR" id="Q5RCD9"/>
<dbReference type="STRING" id="9601.ENSPPYP00000007787"/>
<dbReference type="GeneID" id="100172202"/>
<dbReference type="KEGG" id="pon:100172202"/>
<dbReference type="CTD" id="54993"/>
<dbReference type="eggNOG" id="KOG1721">
    <property type="taxonomic scope" value="Eukaryota"/>
</dbReference>
<dbReference type="InParanoid" id="Q5RCD9"/>
<dbReference type="OrthoDB" id="1095242at2759"/>
<dbReference type="Proteomes" id="UP000001595">
    <property type="component" value="Unplaced"/>
</dbReference>
<dbReference type="GO" id="GO:0005634">
    <property type="term" value="C:nucleus"/>
    <property type="evidence" value="ECO:0007669"/>
    <property type="project" value="UniProtKB-SubCell"/>
</dbReference>
<dbReference type="GO" id="GO:0000981">
    <property type="term" value="F:DNA-binding transcription factor activity, RNA polymerase II-specific"/>
    <property type="evidence" value="ECO:0007669"/>
    <property type="project" value="TreeGrafter"/>
</dbReference>
<dbReference type="GO" id="GO:0000978">
    <property type="term" value="F:RNA polymerase II cis-regulatory region sequence-specific DNA binding"/>
    <property type="evidence" value="ECO:0007669"/>
    <property type="project" value="TreeGrafter"/>
</dbReference>
<dbReference type="GO" id="GO:0008270">
    <property type="term" value="F:zinc ion binding"/>
    <property type="evidence" value="ECO:0007669"/>
    <property type="project" value="UniProtKB-KW"/>
</dbReference>
<dbReference type="GO" id="GO:0030154">
    <property type="term" value="P:cell differentiation"/>
    <property type="evidence" value="ECO:0007669"/>
    <property type="project" value="UniProtKB-KW"/>
</dbReference>
<dbReference type="GO" id="GO:0045944">
    <property type="term" value="P:positive regulation of transcription by RNA polymerase II"/>
    <property type="evidence" value="ECO:0007669"/>
    <property type="project" value="UniProtKB-ARBA"/>
</dbReference>
<dbReference type="GO" id="GO:0007283">
    <property type="term" value="P:spermatogenesis"/>
    <property type="evidence" value="ECO:0007669"/>
    <property type="project" value="UniProtKB-KW"/>
</dbReference>
<dbReference type="FunFam" id="3.30.160.60:FF:002063">
    <property type="entry name" value="RB associated KRAB zinc finger"/>
    <property type="match status" value="1"/>
</dbReference>
<dbReference type="FunFam" id="3.30.160.60:FF:000088">
    <property type="entry name" value="Zinc finger and SCAN domain containing 2"/>
    <property type="match status" value="4"/>
</dbReference>
<dbReference type="FunFam" id="3.30.160.60:FF:003000">
    <property type="entry name" value="Zinc finger and SCAN domain-containing 20"/>
    <property type="match status" value="1"/>
</dbReference>
<dbReference type="FunFam" id="1.10.4020.10:FF:000002">
    <property type="entry name" value="zinc finger and SCAN domain-containing protein 2"/>
    <property type="match status" value="1"/>
</dbReference>
<dbReference type="FunFam" id="3.30.160.60:FF:000557">
    <property type="entry name" value="zinc finger and SCAN domain-containing protein 29"/>
    <property type="match status" value="1"/>
</dbReference>
<dbReference type="FunFam" id="3.30.160.60:FF:000725">
    <property type="entry name" value="zinc finger protein 205 isoform X1"/>
    <property type="match status" value="1"/>
</dbReference>
<dbReference type="FunFam" id="3.30.160.60:FF:000358">
    <property type="entry name" value="zinc finger protein 24"/>
    <property type="match status" value="1"/>
</dbReference>
<dbReference type="FunFam" id="3.30.160.60:FF:000269">
    <property type="entry name" value="Zinc finger protein 287"/>
    <property type="match status" value="1"/>
</dbReference>
<dbReference type="FunFam" id="3.30.160.60:FF:000016">
    <property type="entry name" value="zinc finger protein 37 homolog"/>
    <property type="match status" value="1"/>
</dbReference>
<dbReference type="FunFam" id="3.30.160.60:FF:002090">
    <property type="entry name" value="Zinc finger protein 473"/>
    <property type="match status" value="1"/>
</dbReference>
<dbReference type="FunFam" id="3.30.160.60:FF:000990">
    <property type="entry name" value="zinc finger protein 629 isoform X2"/>
    <property type="match status" value="1"/>
</dbReference>
<dbReference type="FunFam" id="3.30.160.60:FF:000912">
    <property type="entry name" value="Zinc finger protein 660"/>
    <property type="match status" value="1"/>
</dbReference>
<dbReference type="Gene3D" id="3.30.160.60">
    <property type="entry name" value="Classic Zinc Finger"/>
    <property type="match status" value="14"/>
</dbReference>
<dbReference type="Gene3D" id="1.10.4020.10">
    <property type="entry name" value="DNA breaking-rejoining enzymes"/>
    <property type="match status" value="1"/>
</dbReference>
<dbReference type="InterPro" id="IPR050329">
    <property type="entry name" value="GLI_C2H2-zinc-finger"/>
</dbReference>
<dbReference type="InterPro" id="IPR003309">
    <property type="entry name" value="SCAN_dom"/>
</dbReference>
<dbReference type="InterPro" id="IPR038269">
    <property type="entry name" value="SCAN_sf"/>
</dbReference>
<dbReference type="InterPro" id="IPR036236">
    <property type="entry name" value="Znf_C2H2_sf"/>
</dbReference>
<dbReference type="InterPro" id="IPR013087">
    <property type="entry name" value="Znf_C2H2_type"/>
</dbReference>
<dbReference type="PANTHER" id="PTHR19818:SF158">
    <property type="entry name" value="C2H2-TYPE DOMAIN-CONTAINING PROTEIN-RELATED"/>
    <property type="match status" value="1"/>
</dbReference>
<dbReference type="PANTHER" id="PTHR19818">
    <property type="entry name" value="ZINC FINGER PROTEIN ZIC AND GLI"/>
    <property type="match status" value="1"/>
</dbReference>
<dbReference type="Pfam" id="PF02023">
    <property type="entry name" value="SCAN"/>
    <property type="match status" value="1"/>
</dbReference>
<dbReference type="Pfam" id="PF00096">
    <property type="entry name" value="zf-C2H2"/>
    <property type="match status" value="14"/>
</dbReference>
<dbReference type="SMART" id="SM00431">
    <property type="entry name" value="SCAN"/>
    <property type="match status" value="1"/>
</dbReference>
<dbReference type="SMART" id="SM00355">
    <property type="entry name" value="ZnF_C2H2"/>
    <property type="match status" value="14"/>
</dbReference>
<dbReference type="SUPFAM" id="SSF57667">
    <property type="entry name" value="beta-beta-alpha zinc fingers"/>
    <property type="match status" value="8"/>
</dbReference>
<dbReference type="SUPFAM" id="SSF47353">
    <property type="entry name" value="Retrovirus capsid dimerization domain-like"/>
    <property type="match status" value="1"/>
</dbReference>
<dbReference type="PROSITE" id="PS50804">
    <property type="entry name" value="SCAN_BOX"/>
    <property type="match status" value="1"/>
</dbReference>
<dbReference type="PROSITE" id="PS00028">
    <property type="entry name" value="ZINC_FINGER_C2H2_1"/>
    <property type="match status" value="14"/>
</dbReference>
<dbReference type="PROSITE" id="PS50157">
    <property type="entry name" value="ZINC_FINGER_C2H2_2"/>
    <property type="match status" value="14"/>
</dbReference>
<sequence>MMAAEIPRVTTPLSPLVQVPQEEDRQKEEVTTMILEDDSWVQEAVLQEDGPESEPFPQSAGKGSPQEEVTRGPQGALGRLRELCRRWLRPEVHTKEQMLTMLPKEIQAWLQEHRPESSEEAAALVEDLTQTLQDSGSQCVHQPFSVLTVCTVSSRTAWRVLELHLNYFEIQSENGENCNQDMFENESREIFSEMPEGESAQHSDGESDFERDAGIQRPQGHTPGKDHGEVLSQDREVGQLIGLQGTYLGEKPYECPQCGKTFSRKSHLITHERTHTGEKYYKCDECGKSFSDGSNFSRHQTTHTGEKPYKCRDCGKSFSRSANLITHQRIHTGEKPFQCAECGKSFSRSPNLIAHQRTHTGEKPYSCPECGKSFGNRSSLNTHQGIHTGEKPYECKECGESFSYNSNLIRHQRIHTGEKPYKCTDCGQRFSQSSALITHRRTHTGEKPYQCSECGKNFSRSSNLATHRRTHMVEKPYKCGVCGKSFSQSSSLIAHQGMHTGEKPYECLTCGESFSWSSNLLKHQRIHTGEKPYKCSECGKCFSQRSQLVVHQQTHTGEKPYKCLMCGKSFSRGSILVMHQRAHLGDKPYRCPECGKGFSWNSVLIIHQRIHTGEKPYKCPECGKGFSNSSNFITHQRTHMKEKLY</sequence>